<gene>
    <name evidence="1" type="primary">cysG</name>
    <name type="ordered locus">NMA1367</name>
</gene>
<feature type="chain" id="PRO_0000150381" description="Siroheme synthase">
    <location>
        <begin position="1"/>
        <end position="486"/>
    </location>
</feature>
<feature type="region of interest" description="Precorrin-2 dehydrogenase /sirohydrochlorin ferrochelatase" evidence="1">
    <location>
        <begin position="1"/>
        <end position="203"/>
    </location>
</feature>
<feature type="region of interest" description="Uroporphyrinogen-III C-methyltransferase" evidence="1">
    <location>
        <begin position="217"/>
        <end position="486"/>
    </location>
</feature>
<feature type="active site" description="Proton acceptor" evidence="1">
    <location>
        <position position="249"/>
    </location>
</feature>
<feature type="active site" description="Proton donor" evidence="1">
    <location>
        <position position="271"/>
    </location>
</feature>
<feature type="binding site" evidence="1">
    <location>
        <begin position="22"/>
        <end position="23"/>
    </location>
    <ligand>
        <name>NAD(+)</name>
        <dbReference type="ChEBI" id="CHEBI:57540"/>
    </ligand>
</feature>
<feature type="binding site" evidence="1">
    <location>
        <begin position="43"/>
        <end position="44"/>
    </location>
    <ligand>
        <name>NAD(+)</name>
        <dbReference type="ChEBI" id="CHEBI:57540"/>
    </ligand>
</feature>
<feature type="binding site" evidence="1">
    <location>
        <position position="226"/>
    </location>
    <ligand>
        <name>S-adenosyl-L-methionine</name>
        <dbReference type="ChEBI" id="CHEBI:59789"/>
    </ligand>
</feature>
<feature type="binding site" evidence="1">
    <location>
        <begin position="302"/>
        <end position="304"/>
    </location>
    <ligand>
        <name>S-adenosyl-L-methionine</name>
        <dbReference type="ChEBI" id="CHEBI:59789"/>
    </ligand>
</feature>
<feature type="binding site" evidence="1">
    <location>
        <position position="307"/>
    </location>
    <ligand>
        <name>S-adenosyl-L-methionine</name>
        <dbReference type="ChEBI" id="CHEBI:59789"/>
    </ligand>
</feature>
<feature type="binding site" evidence="1">
    <location>
        <begin position="332"/>
        <end position="333"/>
    </location>
    <ligand>
        <name>S-adenosyl-L-methionine</name>
        <dbReference type="ChEBI" id="CHEBI:59789"/>
    </ligand>
</feature>
<feature type="binding site" evidence="1">
    <location>
        <position position="384"/>
    </location>
    <ligand>
        <name>S-adenosyl-L-methionine</name>
        <dbReference type="ChEBI" id="CHEBI:59789"/>
    </ligand>
</feature>
<feature type="binding site" evidence="1">
    <location>
        <position position="413"/>
    </location>
    <ligand>
        <name>S-adenosyl-L-methionine</name>
        <dbReference type="ChEBI" id="CHEBI:59789"/>
    </ligand>
</feature>
<feature type="modified residue" description="Phosphoserine" evidence="1">
    <location>
        <position position="128"/>
    </location>
</feature>
<name>CYSG_NEIMA</name>
<organism>
    <name type="scientific">Neisseria meningitidis serogroup A / serotype 4A (strain DSM 15465 / Z2491)</name>
    <dbReference type="NCBI Taxonomy" id="122587"/>
    <lineage>
        <taxon>Bacteria</taxon>
        <taxon>Pseudomonadati</taxon>
        <taxon>Pseudomonadota</taxon>
        <taxon>Betaproteobacteria</taxon>
        <taxon>Neisseriales</taxon>
        <taxon>Neisseriaceae</taxon>
        <taxon>Neisseria</taxon>
    </lineage>
</organism>
<keyword id="KW-0169">Cobalamin biosynthesis</keyword>
<keyword id="KW-0456">Lyase</keyword>
<keyword id="KW-0489">Methyltransferase</keyword>
<keyword id="KW-0511">Multifunctional enzyme</keyword>
<keyword id="KW-0520">NAD</keyword>
<keyword id="KW-0560">Oxidoreductase</keyword>
<keyword id="KW-0597">Phosphoprotein</keyword>
<keyword id="KW-0627">Porphyrin biosynthesis</keyword>
<keyword id="KW-0949">S-adenosyl-L-methionine</keyword>
<keyword id="KW-0808">Transferase</keyword>
<sequence length="486" mass="52484">MNYFPIFANLAGRPVLVVGGGAVAARKISLLLKAGAEVRVAAKHLNAELSALAAENKILWLAEEFRAEHIRTVFLIIAASSDQALNRRVFHLAESCQKPVNVVDDRDHCSFIFPSVIDRNPVQIAVSSSGSAPVLARLLRERLEALLPPSLGDMAEISGRWRDAVKGKLKSVTERRRFWEKQFNGRFAALVKNRQNTLAERELAGQLEQSRQNDQGGSVSLVGAGPGDAGLLTLKGLQEIQQADVVLYDALVSDGILSLVRRDAERIFVGKRARGGRTPQEDTNALMVRLAREGRRVVRLKGGDPFVFGRGGEELETLARHQIPFSVVPGITAAVGATAYAGIPLTHRDYAQSAVFVTGHRKADAPDIEWQTLARSRQTLVIYMGALKAALIAERLQQHGRSPDTPAAVISQGTLPAQKTATGTLANLAELAETAPNPALIVIGEVVGLHEKLAWFGENAKKESNPAEHAYFALDGLGTGQEQQAA</sequence>
<comment type="function">
    <text evidence="1">Multifunctional enzyme that catalyzes the SAM-dependent methylations of uroporphyrinogen III at position C-2 and C-7 to form precorrin-2 via precorrin-1. Then it catalyzes the NAD-dependent ring dehydrogenation of precorrin-2 to yield sirohydrochlorin. Finally, it catalyzes the ferrochelation of sirohydrochlorin to yield siroheme.</text>
</comment>
<comment type="catalytic activity">
    <reaction evidence="1">
        <text>uroporphyrinogen III + 2 S-adenosyl-L-methionine = precorrin-2 + 2 S-adenosyl-L-homocysteine + H(+)</text>
        <dbReference type="Rhea" id="RHEA:32459"/>
        <dbReference type="ChEBI" id="CHEBI:15378"/>
        <dbReference type="ChEBI" id="CHEBI:57308"/>
        <dbReference type="ChEBI" id="CHEBI:57856"/>
        <dbReference type="ChEBI" id="CHEBI:58827"/>
        <dbReference type="ChEBI" id="CHEBI:59789"/>
        <dbReference type="EC" id="2.1.1.107"/>
    </reaction>
</comment>
<comment type="catalytic activity">
    <reaction evidence="1">
        <text>precorrin-2 + NAD(+) = sirohydrochlorin + NADH + 2 H(+)</text>
        <dbReference type="Rhea" id="RHEA:15613"/>
        <dbReference type="ChEBI" id="CHEBI:15378"/>
        <dbReference type="ChEBI" id="CHEBI:57540"/>
        <dbReference type="ChEBI" id="CHEBI:57945"/>
        <dbReference type="ChEBI" id="CHEBI:58351"/>
        <dbReference type="ChEBI" id="CHEBI:58827"/>
        <dbReference type="EC" id="1.3.1.76"/>
    </reaction>
</comment>
<comment type="catalytic activity">
    <reaction evidence="1">
        <text>siroheme + 2 H(+) = sirohydrochlorin + Fe(2+)</text>
        <dbReference type="Rhea" id="RHEA:24360"/>
        <dbReference type="ChEBI" id="CHEBI:15378"/>
        <dbReference type="ChEBI" id="CHEBI:29033"/>
        <dbReference type="ChEBI" id="CHEBI:58351"/>
        <dbReference type="ChEBI" id="CHEBI:60052"/>
        <dbReference type="EC" id="4.99.1.4"/>
    </reaction>
</comment>
<comment type="pathway">
    <text evidence="1">Cofactor biosynthesis; adenosylcobalamin biosynthesis; precorrin-2 from uroporphyrinogen III: step 1/1.</text>
</comment>
<comment type="pathway">
    <text evidence="1">Cofactor biosynthesis; adenosylcobalamin biosynthesis; sirohydrochlorin from precorrin-2: step 1/1.</text>
</comment>
<comment type="pathway">
    <text evidence="1">Porphyrin-containing compound metabolism; siroheme biosynthesis; precorrin-2 from uroporphyrinogen III: step 1/1.</text>
</comment>
<comment type="pathway">
    <text evidence="1">Porphyrin-containing compound metabolism; siroheme biosynthesis; siroheme from sirohydrochlorin: step 1/1.</text>
</comment>
<comment type="pathway">
    <text evidence="1">Porphyrin-containing compound metabolism; siroheme biosynthesis; sirohydrochlorin from precorrin-2: step 1/1.</text>
</comment>
<comment type="similarity">
    <text evidence="1">In the N-terminal section; belongs to the precorrin-2 dehydrogenase / sirohydrochlorin ferrochelatase family.</text>
</comment>
<comment type="similarity">
    <text evidence="1">In the C-terminal section; belongs to the precorrin methyltransferase family.</text>
</comment>
<proteinExistence type="inferred from homology"/>
<reference key="1">
    <citation type="journal article" date="2000" name="Nature">
        <title>Complete DNA sequence of a serogroup A strain of Neisseria meningitidis Z2491.</title>
        <authorList>
            <person name="Parkhill J."/>
            <person name="Achtman M."/>
            <person name="James K.D."/>
            <person name="Bentley S.D."/>
            <person name="Churcher C.M."/>
            <person name="Klee S.R."/>
            <person name="Morelli G."/>
            <person name="Basham D."/>
            <person name="Brown D."/>
            <person name="Chillingworth T."/>
            <person name="Davies R.M."/>
            <person name="Davis P."/>
            <person name="Devlin K."/>
            <person name="Feltwell T."/>
            <person name="Hamlin N."/>
            <person name="Holroyd S."/>
            <person name="Jagels K."/>
            <person name="Leather S."/>
            <person name="Moule S."/>
            <person name="Mungall K.L."/>
            <person name="Quail M.A."/>
            <person name="Rajandream M.A."/>
            <person name="Rutherford K.M."/>
            <person name="Simmonds M."/>
            <person name="Skelton J."/>
            <person name="Whitehead S."/>
            <person name="Spratt B.G."/>
            <person name="Barrell B.G."/>
        </authorList>
    </citation>
    <scope>NUCLEOTIDE SEQUENCE [LARGE SCALE GENOMIC DNA]</scope>
    <source>
        <strain>DSM 15465 / Z2491</strain>
    </source>
</reference>
<accession>P57001</accession>
<accession>A1IRZ2</accession>
<protein>
    <recommendedName>
        <fullName evidence="1">Siroheme synthase</fullName>
    </recommendedName>
    <domain>
        <recommendedName>
            <fullName evidence="1">Uroporphyrinogen-III C-methyltransferase</fullName>
            <shortName evidence="1">Urogen III methylase</shortName>
            <ecNumber evidence="1">2.1.1.107</ecNumber>
        </recommendedName>
        <alternativeName>
            <fullName evidence="1">SUMT</fullName>
        </alternativeName>
        <alternativeName>
            <fullName evidence="1">Uroporphyrinogen III methylase</fullName>
            <shortName evidence="1">UROM</shortName>
        </alternativeName>
    </domain>
    <domain>
        <recommendedName>
            <fullName evidence="1">Precorrin-2 dehydrogenase</fullName>
            <ecNumber evidence="1">1.3.1.76</ecNumber>
        </recommendedName>
    </domain>
    <domain>
        <recommendedName>
            <fullName evidence="1">Sirohydrochlorin ferrochelatase</fullName>
            <ecNumber evidence="1">4.99.1.4</ecNumber>
        </recommendedName>
    </domain>
</protein>
<evidence type="ECO:0000255" key="1">
    <source>
        <dbReference type="HAMAP-Rule" id="MF_01646"/>
    </source>
</evidence>
<dbReference type="EC" id="2.1.1.107" evidence="1"/>
<dbReference type="EC" id="1.3.1.76" evidence="1"/>
<dbReference type="EC" id="4.99.1.4" evidence="1"/>
<dbReference type="EMBL" id="AL157959">
    <property type="protein sequence ID" value="CAM08540.1"/>
    <property type="molecule type" value="Genomic_DNA"/>
</dbReference>
<dbReference type="PIR" id="A81906">
    <property type="entry name" value="A81906"/>
</dbReference>
<dbReference type="RefSeq" id="WP_002246198.1">
    <property type="nucleotide sequence ID" value="NC_003116.1"/>
</dbReference>
<dbReference type="SMR" id="P57001"/>
<dbReference type="EnsemblBacteria" id="CAM08540">
    <property type="protein sequence ID" value="CAM08540"/>
    <property type="gene ID" value="NMA1367"/>
</dbReference>
<dbReference type="GeneID" id="93386033"/>
<dbReference type="KEGG" id="nma:NMA1367"/>
<dbReference type="HOGENOM" id="CLU_011276_2_0_4"/>
<dbReference type="UniPathway" id="UPA00148">
    <property type="reaction ID" value="UER00211"/>
</dbReference>
<dbReference type="UniPathway" id="UPA00148">
    <property type="reaction ID" value="UER00222"/>
</dbReference>
<dbReference type="UniPathway" id="UPA00262">
    <property type="reaction ID" value="UER00211"/>
</dbReference>
<dbReference type="UniPathway" id="UPA00262">
    <property type="reaction ID" value="UER00222"/>
</dbReference>
<dbReference type="UniPathway" id="UPA00262">
    <property type="reaction ID" value="UER00376"/>
</dbReference>
<dbReference type="Proteomes" id="UP000000626">
    <property type="component" value="Chromosome"/>
</dbReference>
<dbReference type="GO" id="GO:0051287">
    <property type="term" value="F:NAD binding"/>
    <property type="evidence" value="ECO:0007669"/>
    <property type="project" value="InterPro"/>
</dbReference>
<dbReference type="GO" id="GO:0043115">
    <property type="term" value="F:precorrin-2 dehydrogenase activity"/>
    <property type="evidence" value="ECO:0007669"/>
    <property type="project" value="UniProtKB-UniRule"/>
</dbReference>
<dbReference type="GO" id="GO:0051266">
    <property type="term" value="F:sirohydrochlorin ferrochelatase activity"/>
    <property type="evidence" value="ECO:0007669"/>
    <property type="project" value="UniProtKB-EC"/>
</dbReference>
<dbReference type="GO" id="GO:0004851">
    <property type="term" value="F:uroporphyrin-III C-methyltransferase activity"/>
    <property type="evidence" value="ECO:0007669"/>
    <property type="project" value="UniProtKB-UniRule"/>
</dbReference>
<dbReference type="GO" id="GO:0009236">
    <property type="term" value="P:cobalamin biosynthetic process"/>
    <property type="evidence" value="ECO:0007669"/>
    <property type="project" value="UniProtKB-UniRule"/>
</dbReference>
<dbReference type="GO" id="GO:0032259">
    <property type="term" value="P:methylation"/>
    <property type="evidence" value="ECO:0007669"/>
    <property type="project" value="UniProtKB-KW"/>
</dbReference>
<dbReference type="GO" id="GO:0019354">
    <property type="term" value="P:siroheme biosynthetic process"/>
    <property type="evidence" value="ECO:0007669"/>
    <property type="project" value="UniProtKB-UniRule"/>
</dbReference>
<dbReference type="CDD" id="cd11642">
    <property type="entry name" value="SUMT"/>
    <property type="match status" value="1"/>
</dbReference>
<dbReference type="FunFam" id="3.30.160.110:FF:000001">
    <property type="entry name" value="Siroheme synthase"/>
    <property type="match status" value="1"/>
</dbReference>
<dbReference type="FunFam" id="3.30.950.10:FF:000001">
    <property type="entry name" value="Siroheme synthase"/>
    <property type="match status" value="1"/>
</dbReference>
<dbReference type="FunFam" id="3.40.1010.10:FF:000001">
    <property type="entry name" value="Siroheme synthase"/>
    <property type="match status" value="1"/>
</dbReference>
<dbReference type="Gene3D" id="3.40.1010.10">
    <property type="entry name" value="Cobalt-precorrin-4 Transmethylase, Domain 1"/>
    <property type="match status" value="1"/>
</dbReference>
<dbReference type="Gene3D" id="3.30.950.10">
    <property type="entry name" value="Methyltransferase, Cobalt-precorrin-4 Transmethylase, Domain 2"/>
    <property type="match status" value="1"/>
</dbReference>
<dbReference type="Gene3D" id="3.40.50.720">
    <property type="entry name" value="NAD(P)-binding Rossmann-like Domain"/>
    <property type="match status" value="1"/>
</dbReference>
<dbReference type="Gene3D" id="1.10.8.210">
    <property type="entry name" value="Sirohaem synthase, dimerisation domain"/>
    <property type="match status" value="1"/>
</dbReference>
<dbReference type="Gene3D" id="3.30.160.110">
    <property type="entry name" value="Siroheme synthase, domain 2"/>
    <property type="match status" value="1"/>
</dbReference>
<dbReference type="HAMAP" id="MF_01646">
    <property type="entry name" value="Siroheme_synth"/>
    <property type="match status" value="1"/>
</dbReference>
<dbReference type="InterPro" id="IPR000878">
    <property type="entry name" value="4pyrrol_Mease"/>
</dbReference>
<dbReference type="InterPro" id="IPR035996">
    <property type="entry name" value="4pyrrol_Methylase_sf"/>
</dbReference>
<dbReference type="InterPro" id="IPR014777">
    <property type="entry name" value="4pyrrole_Mease_sub1"/>
</dbReference>
<dbReference type="InterPro" id="IPR014776">
    <property type="entry name" value="4pyrrole_Mease_sub2"/>
</dbReference>
<dbReference type="InterPro" id="IPR006366">
    <property type="entry name" value="CobA/CysG_C"/>
</dbReference>
<dbReference type="InterPro" id="IPR036291">
    <property type="entry name" value="NAD(P)-bd_dom_sf"/>
</dbReference>
<dbReference type="InterPro" id="IPR050161">
    <property type="entry name" value="Siro_Cobalamin_biosynth"/>
</dbReference>
<dbReference type="InterPro" id="IPR037115">
    <property type="entry name" value="Sirohaem_synt_dimer_dom_sf"/>
</dbReference>
<dbReference type="InterPro" id="IPR012409">
    <property type="entry name" value="Sirohaem_synth"/>
</dbReference>
<dbReference type="InterPro" id="IPR028281">
    <property type="entry name" value="Sirohaem_synthase_central"/>
</dbReference>
<dbReference type="InterPro" id="IPR019478">
    <property type="entry name" value="Sirohaem_synthase_dimer_dom"/>
</dbReference>
<dbReference type="InterPro" id="IPR006367">
    <property type="entry name" value="Sirohaem_synthase_N"/>
</dbReference>
<dbReference type="InterPro" id="IPR003043">
    <property type="entry name" value="Uropor_MeTrfase_CS"/>
</dbReference>
<dbReference type="NCBIfam" id="TIGR01469">
    <property type="entry name" value="cobA_cysG_Cterm"/>
    <property type="match status" value="1"/>
</dbReference>
<dbReference type="NCBIfam" id="TIGR01470">
    <property type="entry name" value="cysG_Nterm"/>
    <property type="match status" value="1"/>
</dbReference>
<dbReference type="NCBIfam" id="NF004790">
    <property type="entry name" value="PRK06136.1"/>
    <property type="match status" value="1"/>
</dbReference>
<dbReference type="NCBIfam" id="NF007922">
    <property type="entry name" value="PRK10637.1"/>
    <property type="match status" value="1"/>
</dbReference>
<dbReference type="PANTHER" id="PTHR45790:SF1">
    <property type="entry name" value="SIROHEME SYNTHASE"/>
    <property type="match status" value="1"/>
</dbReference>
<dbReference type="PANTHER" id="PTHR45790">
    <property type="entry name" value="SIROHEME SYNTHASE-RELATED"/>
    <property type="match status" value="1"/>
</dbReference>
<dbReference type="Pfam" id="PF10414">
    <property type="entry name" value="CysG_dimeriser"/>
    <property type="match status" value="1"/>
</dbReference>
<dbReference type="Pfam" id="PF13241">
    <property type="entry name" value="NAD_binding_7"/>
    <property type="match status" value="1"/>
</dbReference>
<dbReference type="Pfam" id="PF14824">
    <property type="entry name" value="Sirohm_synth_M"/>
    <property type="match status" value="1"/>
</dbReference>
<dbReference type="Pfam" id="PF00590">
    <property type="entry name" value="TP_methylase"/>
    <property type="match status" value="1"/>
</dbReference>
<dbReference type="PIRSF" id="PIRSF036426">
    <property type="entry name" value="Sirohaem_synth"/>
    <property type="match status" value="1"/>
</dbReference>
<dbReference type="SUPFAM" id="SSF51735">
    <property type="entry name" value="NAD(P)-binding Rossmann-fold domains"/>
    <property type="match status" value="1"/>
</dbReference>
<dbReference type="SUPFAM" id="SSF75615">
    <property type="entry name" value="Siroheme synthase middle domains-like"/>
    <property type="match status" value="1"/>
</dbReference>
<dbReference type="SUPFAM" id="SSF53790">
    <property type="entry name" value="Tetrapyrrole methylase"/>
    <property type="match status" value="1"/>
</dbReference>
<dbReference type="PROSITE" id="PS00839">
    <property type="entry name" value="SUMT_1"/>
    <property type="match status" value="1"/>
</dbReference>
<dbReference type="PROSITE" id="PS00840">
    <property type="entry name" value="SUMT_2"/>
    <property type="match status" value="1"/>
</dbReference>